<organism>
    <name type="scientific">Aeromonas salmonicida</name>
    <dbReference type="NCBI Taxonomy" id="645"/>
    <lineage>
        <taxon>Bacteria</taxon>
        <taxon>Pseudomonadati</taxon>
        <taxon>Pseudomonadota</taxon>
        <taxon>Gammaproteobacteria</taxon>
        <taxon>Aeromonadales</taxon>
        <taxon>Aeromonadaceae</taxon>
        <taxon>Aeromonas</taxon>
    </lineage>
</organism>
<feature type="chain" id="PRO_0000196251" description="Hemolysin-1">
    <location>
        <begin position="1"/>
        <end position="572"/>
    </location>
</feature>
<dbReference type="EMBL" id="X65047">
    <property type="protein sequence ID" value="CAA46183.1"/>
    <property type="molecule type" value="Genomic_DNA"/>
</dbReference>
<dbReference type="PIR" id="I39674">
    <property type="entry name" value="I39674"/>
</dbReference>
<dbReference type="SMR" id="Q08675"/>
<dbReference type="GO" id="GO:0016788">
    <property type="term" value="F:hydrolase activity, acting on ester bonds"/>
    <property type="evidence" value="ECO:0007669"/>
    <property type="project" value="InterPro"/>
</dbReference>
<dbReference type="GO" id="GO:0090729">
    <property type="term" value="F:toxin activity"/>
    <property type="evidence" value="ECO:0007669"/>
    <property type="project" value="UniProtKB-KW"/>
</dbReference>
<dbReference type="GO" id="GO:0031640">
    <property type="term" value="P:killing of cells of another organism"/>
    <property type="evidence" value="ECO:0007669"/>
    <property type="project" value="UniProtKB-KW"/>
</dbReference>
<dbReference type="InterPro" id="IPR008947">
    <property type="entry name" value="PLipase_C/P1_nuclease_dom_sf"/>
</dbReference>
<dbReference type="SUPFAM" id="SSF48537">
    <property type="entry name" value="Phospholipase C/P1 nuclease"/>
    <property type="match status" value="1"/>
</dbReference>
<gene>
    <name type="primary">ash1</name>
</gene>
<protein>
    <recommendedName>
        <fullName>Hemolysin-1</fullName>
    </recommendedName>
</protein>
<name>HLY1_AERSA</name>
<proteinExistence type="predicted"/>
<comment type="function">
    <text>Bacterial hemolysins are exotoxins that attack blood cell membranes and cause cell rupture by mechanisms not clearly defined.</text>
</comment>
<sequence>MNIKKLSLCIFFATTQVHAFTQWGAGGITPMGHEWLTRTSALEVLNAEHKTSVDPNDPRNTWTSGLAKNIDISTADDEVAKIKSHTNDNSLYAPRSDAVYSAIVGQRWVDLGGMNVANNLISQTGPDCFDAVSQEPADIQQDHFMRRYDDNGQQGGVKSAQRGQERFITHFINAAMATNKRIVVWDGGGSSAKTDVDYNYFLFGRAVHLFQDSFSPEHVVRSPSDNYEKVRQVKAYICTEGAEQHAHSTGAVLDYTSGDVIWKVGTKTDTGWGGYKASNMKPVALVAMEASKDLWAAFMRTMSVDINEREKYARNEAQVLIDKWMSFDKDEMEHWYDNENNRDNTYVKVDGDTGKGKLQKECMSGLSAKNRYGATIKPKTQKELVDVLDDSRRYCLFNIEAEPGYADANDPYLNIPFNWRWKSNSWLVPNASWQQKQLDRDTGKIIKIKEFTNNQELTVDSIENNYSIVTGAKKPLSLVRVPGDGGKSFYLRSKDNPYLFFSYSDKKNGRIKLWHSPNQAEFEILPGNNIFNLKNTYWNQYVWYDKNSKGAYLTEKGSPDNASSKWIISEEN</sequence>
<reference key="1">
    <citation type="journal article" date="1993" name="Microb. Pathog.">
        <title>Cloning and characterization of three hemolysin genes from Aeromonas salmonicida.</title>
        <authorList>
            <person name="Hirono I."/>
            <person name="Aoki T."/>
        </authorList>
    </citation>
    <scope>NUCLEOTIDE SEQUENCE [GENOMIC DNA]</scope>
    <source>
        <strain>ATCC 14174 / NBRC 12659 / NCIMB 833</strain>
    </source>
</reference>
<accession>Q08675</accession>
<keyword id="KW-0204">Cytolysis</keyword>
<keyword id="KW-0354">Hemolysis</keyword>
<keyword id="KW-0800">Toxin</keyword>
<keyword id="KW-0843">Virulence</keyword>